<evidence type="ECO:0000255" key="1">
    <source>
        <dbReference type="HAMAP-Rule" id="MF_00171"/>
    </source>
</evidence>
<keyword id="KW-0413">Isomerase</keyword>
<keyword id="KW-0819">tRNA processing</keyword>
<feature type="chain" id="PRO_1000097782" description="tRNA pseudouridine synthase A">
    <location>
        <begin position="1"/>
        <end position="270"/>
    </location>
</feature>
<feature type="active site" description="Nucleophile" evidence="1">
    <location>
        <position position="60"/>
    </location>
</feature>
<feature type="binding site" evidence="1">
    <location>
        <position position="118"/>
    </location>
    <ligand>
        <name>substrate</name>
    </ligand>
</feature>
<protein>
    <recommendedName>
        <fullName evidence="1">tRNA pseudouridine synthase A</fullName>
        <ecNumber evidence="1">5.4.99.12</ecNumber>
    </recommendedName>
    <alternativeName>
        <fullName evidence="1">tRNA pseudouridine(38-40) synthase</fullName>
    </alternativeName>
    <alternativeName>
        <fullName evidence="1">tRNA pseudouridylate synthase I</fullName>
    </alternativeName>
    <alternativeName>
        <fullName evidence="1">tRNA-uridine isomerase I</fullName>
    </alternativeName>
</protein>
<reference key="1">
    <citation type="journal article" date="2011" name="J. Bacteriol.">
        <title>Comparative genomics of 28 Salmonella enterica isolates: evidence for CRISPR-mediated adaptive sublineage evolution.</title>
        <authorList>
            <person name="Fricke W.F."/>
            <person name="Mammel M.K."/>
            <person name="McDermott P.F."/>
            <person name="Tartera C."/>
            <person name="White D.G."/>
            <person name="Leclerc J.E."/>
            <person name="Ravel J."/>
            <person name="Cebula T.A."/>
        </authorList>
    </citation>
    <scope>NUCLEOTIDE SEQUENCE [LARGE SCALE GENOMIC DNA]</scope>
    <source>
        <strain>SL254</strain>
    </source>
</reference>
<dbReference type="EC" id="5.4.99.12" evidence="1"/>
<dbReference type="EMBL" id="CP001113">
    <property type="protein sequence ID" value="ACF62678.1"/>
    <property type="molecule type" value="Genomic_DNA"/>
</dbReference>
<dbReference type="RefSeq" id="WP_000016631.1">
    <property type="nucleotide sequence ID" value="NZ_CCMR01000001.1"/>
</dbReference>
<dbReference type="SMR" id="B4SZP0"/>
<dbReference type="KEGG" id="see:SNSL254_A2556"/>
<dbReference type="HOGENOM" id="CLU_014673_0_2_6"/>
<dbReference type="Proteomes" id="UP000008824">
    <property type="component" value="Chromosome"/>
</dbReference>
<dbReference type="GO" id="GO:0003723">
    <property type="term" value="F:RNA binding"/>
    <property type="evidence" value="ECO:0007669"/>
    <property type="project" value="InterPro"/>
</dbReference>
<dbReference type="GO" id="GO:0160147">
    <property type="term" value="F:tRNA pseudouridine(38-40) synthase activity"/>
    <property type="evidence" value="ECO:0007669"/>
    <property type="project" value="UniProtKB-EC"/>
</dbReference>
<dbReference type="GO" id="GO:0031119">
    <property type="term" value="P:tRNA pseudouridine synthesis"/>
    <property type="evidence" value="ECO:0007669"/>
    <property type="project" value="UniProtKB-UniRule"/>
</dbReference>
<dbReference type="CDD" id="cd02570">
    <property type="entry name" value="PseudoU_synth_EcTruA"/>
    <property type="match status" value="1"/>
</dbReference>
<dbReference type="FunFam" id="3.30.70.580:FF:000001">
    <property type="entry name" value="tRNA pseudouridine synthase A"/>
    <property type="match status" value="1"/>
</dbReference>
<dbReference type="FunFam" id="3.30.70.660:FF:000001">
    <property type="entry name" value="tRNA pseudouridine synthase A"/>
    <property type="match status" value="1"/>
</dbReference>
<dbReference type="Gene3D" id="3.30.70.660">
    <property type="entry name" value="Pseudouridine synthase I, catalytic domain, C-terminal subdomain"/>
    <property type="match status" value="1"/>
</dbReference>
<dbReference type="Gene3D" id="3.30.70.580">
    <property type="entry name" value="Pseudouridine synthase I, catalytic domain, N-terminal subdomain"/>
    <property type="match status" value="1"/>
</dbReference>
<dbReference type="HAMAP" id="MF_00171">
    <property type="entry name" value="TruA"/>
    <property type="match status" value="1"/>
</dbReference>
<dbReference type="InterPro" id="IPR020103">
    <property type="entry name" value="PsdUridine_synth_cat_dom_sf"/>
</dbReference>
<dbReference type="InterPro" id="IPR001406">
    <property type="entry name" value="PsdUridine_synth_TruA"/>
</dbReference>
<dbReference type="InterPro" id="IPR020097">
    <property type="entry name" value="PsdUridine_synth_TruA_a/b_dom"/>
</dbReference>
<dbReference type="InterPro" id="IPR020095">
    <property type="entry name" value="PsdUridine_synth_TruA_C"/>
</dbReference>
<dbReference type="InterPro" id="IPR020094">
    <property type="entry name" value="TruA/RsuA/RluB/E/F_N"/>
</dbReference>
<dbReference type="NCBIfam" id="TIGR00071">
    <property type="entry name" value="hisT_truA"/>
    <property type="match status" value="1"/>
</dbReference>
<dbReference type="PANTHER" id="PTHR11142">
    <property type="entry name" value="PSEUDOURIDYLATE SYNTHASE"/>
    <property type="match status" value="1"/>
</dbReference>
<dbReference type="PANTHER" id="PTHR11142:SF0">
    <property type="entry name" value="TRNA PSEUDOURIDINE SYNTHASE-LIKE 1"/>
    <property type="match status" value="1"/>
</dbReference>
<dbReference type="Pfam" id="PF01416">
    <property type="entry name" value="PseudoU_synth_1"/>
    <property type="match status" value="2"/>
</dbReference>
<dbReference type="PIRSF" id="PIRSF001430">
    <property type="entry name" value="tRNA_psdUrid_synth"/>
    <property type="match status" value="1"/>
</dbReference>
<dbReference type="SUPFAM" id="SSF55120">
    <property type="entry name" value="Pseudouridine synthase"/>
    <property type="match status" value="1"/>
</dbReference>
<name>TRUA_SALNS</name>
<accession>B4SZP0</accession>
<proteinExistence type="inferred from homology"/>
<comment type="function">
    <text evidence="1">Formation of pseudouridine at positions 38, 39 and 40 in the anticodon stem and loop of transfer RNAs.</text>
</comment>
<comment type="catalytic activity">
    <reaction evidence="1">
        <text>uridine(38/39/40) in tRNA = pseudouridine(38/39/40) in tRNA</text>
        <dbReference type="Rhea" id="RHEA:22376"/>
        <dbReference type="Rhea" id="RHEA-COMP:10085"/>
        <dbReference type="Rhea" id="RHEA-COMP:10087"/>
        <dbReference type="ChEBI" id="CHEBI:65314"/>
        <dbReference type="ChEBI" id="CHEBI:65315"/>
        <dbReference type="EC" id="5.4.99.12"/>
    </reaction>
</comment>
<comment type="subunit">
    <text evidence="1">Homodimer.</text>
</comment>
<comment type="similarity">
    <text evidence="1">Belongs to the tRNA pseudouridine synthase TruA family.</text>
</comment>
<sequence>MSGQQSSPVYKIALGIEYDGSKYYGWQRQNEVRSVQEKLEKALSQVANEPINVFCAGRTDAGVHGTGQVVHFETTALRKDAAWTLGVNANLPGDIAVRWVKTVPDDFHARFSATARRYRYIIYNHRLRPAVLAKGVTHYYEPLDAERMHRAAQCLLGENDFTSFRAVQCQSRTPWRNVMHINVTRHGPYVVVDIKANAFVHHMVRNIVGSLLEVGAHNQPESWIAELLAARDRTLAAATAKAEGLYLVAVDYPDRFDLPKPPMGPLFLAD</sequence>
<organism>
    <name type="scientific">Salmonella newport (strain SL254)</name>
    <dbReference type="NCBI Taxonomy" id="423368"/>
    <lineage>
        <taxon>Bacteria</taxon>
        <taxon>Pseudomonadati</taxon>
        <taxon>Pseudomonadota</taxon>
        <taxon>Gammaproteobacteria</taxon>
        <taxon>Enterobacterales</taxon>
        <taxon>Enterobacteriaceae</taxon>
        <taxon>Salmonella</taxon>
    </lineage>
</organism>
<gene>
    <name evidence="1" type="primary">truA</name>
    <name type="ordered locus">SNSL254_A2556</name>
</gene>